<proteinExistence type="inferred from homology"/>
<name>EFTU_FRATN</name>
<sequence length="394" mass="43391">MAKEKFERSKPHVNVGTIGHVDHGKTTLTAAITKVMAEKNGGMARKFDEIDSAPEEKARGITINTSHVEYESPNRHYAHVDCPGHADYVKNMITGAAQMDGAILVCSAADGPMPQTREHILLSRQVGVPKIVVFLNKCDMVDDEELLELVEMEVRELLDQYEFPGDDTPVIMGSALRAIEGDEAYVEKIVELVQAMDDYIPAPERDTEKPFILPIEDVFSISGRGTVVTGRIERGVVNVGDEVEVVGIRPTQKTTVTGVEMFRKLLDRGEAGDNVGILVRGLKRDDVERGQVLCKPGSIKPHTKFEAEVYVLSKEEGGRHTPFFKGYRPQFYFRTTDITGAVELPEGVEMVMPGDNVKMTITLINPIAMDEGLRFAIREGGRTVGAGVVAKIIE</sequence>
<dbReference type="EC" id="3.6.5.3" evidence="2"/>
<dbReference type="EMBL" id="CP000439">
    <property type="protein sequence ID" value="ABK90439.1"/>
    <property type="molecule type" value="Genomic_DNA"/>
</dbReference>
<dbReference type="RefSeq" id="WP_003024794.1">
    <property type="nucleotide sequence ID" value="NZ_CP009633.1"/>
</dbReference>
<dbReference type="SMR" id="A0Q874"/>
<dbReference type="KEGG" id="ftn:FTN_1576"/>
<dbReference type="KEGG" id="ftx:AW25_422"/>
<dbReference type="BioCyc" id="FTUL401614:G1G75-1628-MONOMER"/>
<dbReference type="Proteomes" id="UP000000762">
    <property type="component" value="Chromosome"/>
</dbReference>
<dbReference type="GO" id="GO:0005829">
    <property type="term" value="C:cytosol"/>
    <property type="evidence" value="ECO:0007669"/>
    <property type="project" value="TreeGrafter"/>
</dbReference>
<dbReference type="GO" id="GO:0005525">
    <property type="term" value="F:GTP binding"/>
    <property type="evidence" value="ECO:0007669"/>
    <property type="project" value="UniProtKB-UniRule"/>
</dbReference>
<dbReference type="GO" id="GO:0003924">
    <property type="term" value="F:GTPase activity"/>
    <property type="evidence" value="ECO:0007669"/>
    <property type="project" value="InterPro"/>
</dbReference>
<dbReference type="GO" id="GO:0097216">
    <property type="term" value="F:guanosine tetraphosphate binding"/>
    <property type="evidence" value="ECO:0007669"/>
    <property type="project" value="UniProtKB-ARBA"/>
</dbReference>
<dbReference type="GO" id="GO:0003746">
    <property type="term" value="F:translation elongation factor activity"/>
    <property type="evidence" value="ECO:0007669"/>
    <property type="project" value="UniProtKB-UniRule"/>
</dbReference>
<dbReference type="CDD" id="cd01884">
    <property type="entry name" value="EF_Tu"/>
    <property type="match status" value="1"/>
</dbReference>
<dbReference type="CDD" id="cd03697">
    <property type="entry name" value="EFTU_II"/>
    <property type="match status" value="1"/>
</dbReference>
<dbReference type="CDD" id="cd03707">
    <property type="entry name" value="EFTU_III"/>
    <property type="match status" value="1"/>
</dbReference>
<dbReference type="FunFam" id="2.40.30.10:FF:000001">
    <property type="entry name" value="Elongation factor Tu"/>
    <property type="match status" value="1"/>
</dbReference>
<dbReference type="FunFam" id="3.40.50.300:FF:000003">
    <property type="entry name" value="Elongation factor Tu"/>
    <property type="match status" value="1"/>
</dbReference>
<dbReference type="Gene3D" id="3.40.50.300">
    <property type="entry name" value="P-loop containing nucleotide triphosphate hydrolases"/>
    <property type="match status" value="1"/>
</dbReference>
<dbReference type="Gene3D" id="2.40.30.10">
    <property type="entry name" value="Translation factors"/>
    <property type="match status" value="2"/>
</dbReference>
<dbReference type="HAMAP" id="MF_00118_B">
    <property type="entry name" value="EF_Tu_B"/>
    <property type="match status" value="1"/>
</dbReference>
<dbReference type="InterPro" id="IPR041709">
    <property type="entry name" value="EF-Tu_GTP-bd"/>
</dbReference>
<dbReference type="InterPro" id="IPR050055">
    <property type="entry name" value="EF-Tu_GTPase"/>
</dbReference>
<dbReference type="InterPro" id="IPR004161">
    <property type="entry name" value="EFTu-like_2"/>
</dbReference>
<dbReference type="InterPro" id="IPR033720">
    <property type="entry name" value="EFTU_2"/>
</dbReference>
<dbReference type="InterPro" id="IPR031157">
    <property type="entry name" value="G_TR_CS"/>
</dbReference>
<dbReference type="InterPro" id="IPR027417">
    <property type="entry name" value="P-loop_NTPase"/>
</dbReference>
<dbReference type="InterPro" id="IPR005225">
    <property type="entry name" value="Small_GTP-bd"/>
</dbReference>
<dbReference type="InterPro" id="IPR000795">
    <property type="entry name" value="T_Tr_GTP-bd_dom"/>
</dbReference>
<dbReference type="InterPro" id="IPR009000">
    <property type="entry name" value="Transl_B-barrel_sf"/>
</dbReference>
<dbReference type="InterPro" id="IPR009001">
    <property type="entry name" value="Transl_elong_EF1A/Init_IF2_C"/>
</dbReference>
<dbReference type="InterPro" id="IPR004541">
    <property type="entry name" value="Transl_elong_EFTu/EF1A_bac/org"/>
</dbReference>
<dbReference type="InterPro" id="IPR004160">
    <property type="entry name" value="Transl_elong_EFTu/EF1A_C"/>
</dbReference>
<dbReference type="NCBIfam" id="TIGR00485">
    <property type="entry name" value="EF-Tu"/>
    <property type="match status" value="1"/>
</dbReference>
<dbReference type="NCBIfam" id="NF000766">
    <property type="entry name" value="PRK00049.1"/>
    <property type="match status" value="1"/>
</dbReference>
<dbReference type="NCBIfam" id="NF009372">
    <property type="entry name" value="PRK12735.1"/>
    <property type="match status" value="1"/>
</dbReference>
<dbReference type="NCBIfam" id="NF009373">
    <property type="entry name" value="PRK12736.1"/>
    <property type="match status" value="1"/>
</dbReference>
<dbReference type="NCBIfam" id="TIGR00231">
    <property type="entry name" value="small_GTP"/>
    <property type="match status" value="1"/>
</dbReference>
<dbReference type="PANTHER" id="PTHR43721:SF22">
    <property type="entry name" value="ELONGATION FACTOR TU, MITOCHONDRIAL"/>
    <property type="match status" value="1"/>
</dbReference>
<dbReference type="PANTHER" id="PTHR43721">
    <property type="entry name" value="ELONGATION FACTOR TU-RELATED"/>
    <property type="match status" value="1"/>
</dbReference>
<dbReference type="Pfam" id="PF00009">
    <property type="entry name" value="GTP_EFTU"/>
    <property type="match status" value="1"/>
</dbReference>
<dbReference type="Pfam" id="PF03144">
    <property type="entry name" value="GTP_EFTU_D2"/>
    <property type="match status" value="1"/>
</dbReference>
<dbReference type="Pfam" id="PF03143">
    <property type="entry name" value="GTP_EFTU_D3"/>
    <property type="match status" value="1"/>
</dbReference>
<dbReference type="PRINTS" id="PR00315">
    <property type="entry name" value="ELONGATNFCT"/>
</dbReference>
<dbReference type="SUPFAM" id="SSF50465">
    <property type="entry name" value="EF-Tu/eEF-1alpha/eIF2-gamma C-terminal domain"/>
    <property type="match status" value="1"/>
</dbReference>
<dbReference type="SUPFAM" id="SSF52540">
    <property type="entry name" value="P-loop containing nucleoside triphosphate hydrolases"/>
    <property type="match status" value="1"/>
</dbReference>
<dbReference type="SUPFAM" id="SSF50447">
    <property type="entry name" value="Translation proteins"/>
    <property type="match status" value="1"/>
</dbReference>
<dbReference type="PROSITE" id="PS00301">
    <property type="entry name" value="G_TR_1"/>
    <property type="match status" value="1"/>
</dbReference>
<dbReference type="PROSITE" id="PS51722">
    <property type="entry name" value="G_TR_2"/>
    <property type="match status" value="1"/>
</dbReference>
<feature type="chain" id="PRO_1000015662" description="Elongation factor Tu">
    <location>
        <begin position="1"/>
        <end position="394"/>
    </location>
</feature>
<feature type="domain" description="tr-type G">
    <location>
        <begin position="10"/>
        <end position="204"/>
    </location>
</feature>
<feature type="region of interest" description="G1" evidence="1">
    <location>
        <begin position="19"/>
        <end position="26"/>
    </location>
</feature>
<feature type="region of interest" description="G2" evidence="1">
    <location>
        <begin position="60"/>
        <end position="64"/>
    </location>
</feature>
<feature type="region of interest" description="G3" evidence="1">
    <location>
        <begin position="81"/>
        <end position="84"/>
    </location>
</feature>
<feature type="region of interest" description="G4" evidence="1">
    <location>
        <begin position="136"/>
        <end position="139"/>
    </location>
</feature>
<feature type="region of interest" description="G5" evidence="1">
    <location>
        <begin position="174"/>
        <end position="176"/>
    </location>
</feature>
<feature type="binding site" evidence="2">
    <location>
        <begin position="19"/>
        <end position="26"/>
    </location>
    <ligand>
        <name>GTP</name>
        <dbReference type="ChEBI" id="CHEBI:37565"/>
    </ligand>
</feature>
<feature type="binding site" evidence="2">
    <location>
        <position position="26"/>
    </location>
    <ligand>
        <name>Mg(2+)</name>
        <dbReference type="ChEBI" id="CHEBI:18420"/>
    </ligand>
</feature>
<feature type="binding site" evidence="2">
    <location>
        <begin position="81"/>
        <end position="85"/>
    </location>
    <ligand>
        <name>GTP</name>
        <dbReference type="ChEBI" id="CHEBI:37565"/>
    </ligand>
</feature>
<feature type="binding site" evidence="2">
    <location>
        <begin position="136"/>
        <end position="139"/>
    </location>
    <ligand>
        <name>GTP</name>
        <dbReference type="ChEBI" id="CHEBI:37565"/>
    </ligand>
</feature>
<comment type="function">
    <text evidence="2">GTP hydrolase that promotes the GTP-dependent binding of aminoacyl-tRNA to the A-site of ribosomes during protein biosynthesis.</text>
</comment>
<comment type="catalytic activity">
    <reaction evidence="2">
        <text>GTP + H2O = GDP + phosphate + H(+)</text>
        <dbReference type="Rhea" id="RHEA:19669"/>
        <dbReference type="ChEBI" id="CHEBI:15377"/>
        <dbReference type="ChEBI" id="CHEBI:15378"/>
        <dbReference type="ChEBI" id="CHEBI:37565"/>
        <dbReference type="ChEBI" id="CHEBI:43474"/>
        <dbReference type="ChEBI" id="CHEBI:58189"/>
        <dbReference type="EC" id="3.6.5.3"/>
    </reaction>
    <physiologicalReaction direction="left-to-right" evidence="2">
        <dbReference type="Rhea" id="RHEA:19670"/>
    </physiologicalReaction>
</comment>
<comment type="subunit">
    <text evidence="2">Monomer.</text>
</comment>
<comment type="subcellular location">
    <subcellularLocation>
        <location evidence="2">Cytoplasm</location>
    </subcellularLocation>
</comment>
<comment type="similarity">
    <text evidence="2">Belongs to the TRAFAC class translation factor GTPase superfamily. Classic translation factor GTPase family. EF-Tu/EF-1A subfamily.</text>
</comment>
<keyword id="KW-0963">Cytoplasm</keyword>
<keyword id="KW-0251">Elongation factor</keyword>
<keyword id="KW-0342">GTP-binding</keyword>
<keyword id="KW-0378">Hydrolase</keyword>
<keyword id="KW-0460">Magnesium</keyword>
<keyword id="KW-0479">Metal-binding</keyword>
<keyword id="KW-0547">Nucleotide-binding</keyword>
<keyword id="KW-0648">Protein biosynthesis</keyword>
<organism>
    <name type="scientific">Francisella tularensis subsp. novicida (strain U112)</name>
    <dbReference type="NCBI Taxonomy" id="401614"/>
    <lineage>
        <taxon>Bacteria</taxon>
        <taxon>Pseudomonadati</taxon>
        <taxon>Pseudomonadota</taxon>
        <taxon>Gammaproteobacteria</taxon>
        <taxon>Thiotrichales</taxon>
        <taxon>Francisellaceae</taxon>
        <taxon>Francisella</taxon>
    </lineage>
</organism>
<accession>A0Q874</accession>
<evidence type="ECO:0000250" key="1"/>
<evidence type="ECO:0000255" key="2">
    <source>
        <dbReference type="HAMAP-Rule" id="MF_00118"/>
    </source>
</evidence>
<reference key="1">
    <citation type="journal article" date="2007" name="Genome Biol.">
        <title>Comparison of Francisella tularensis genomes reveals evolutionary events associated with the emergence of human pathogenic strains.</title>
        <authorList>
            <person name="Rohmer L."/>
            <person name="Fong C."/>
            <person name="Abmayr S."/>
            <person name="Wasnick M."/>
            <person name="Larson Freeman T.J."/>
            <person name="Radey M."/>
            <person name="Guina T."/>
            <person name="Svensson K."/>
            <person name="Hayden H.S."/>
            <person name="Jacobs M."/>
            <person name="Gallagher L.A."/>
            <person name="Manoil C."/>
            <person name="Ernst R.K."/>
            <person name="Drees B."/>
            <person name="Buckley D."/>
            <person name="Haugen E."/>
            <person name="Bovee D."/>
            <person name="Zhou Y."/>
            <person name="Chang J."/>
            <person name="Levy R."/>
            <person name="Lim R."/>
            <person name="Gillett W."/>
            <person name="Guenthener D."/>
            <person name="Kang A."/>
            <person name="Shaffer S.A."/>
            <person name="Taylor G."/>
            <person name="Chen J."/>
            <person name="Gallis B."/>
            <person name="D'Argenio D.A."/>
            <person name="Forsman M."/>
            <person name="Olson M.V."/>
            <person name="Goodlett D.R."/>
            <person name="Kaul R."/>
            <person name="Miller S.I."/>
            <person name="Brittnacher M.J."/>
        </authorList>
    </citation>
    <scope>NUCLEOTIDE SEQUENCE [LARGE SCALE GENOMIC DNA]</scope>
    <source>
        <strain>U112</strain>
    </source>
</reference>
<protein>
    <recommendedName>
        <fullName evidence="2">Elongation factor Tu</fullName>
        <shortName evidence="2">EF-Tu</shortName>
        <ecNumber evidence="2">3.6.5.3</ecNumber>
    </recommendedName>
</protein>
<gene>
    <name evidence="2" type="primary">tuf</name>
    <name type="ordered locus">FTN_1576</name>
</gene>